<dbReference type="EMBL" id="CP000553">
    <property type="protein sequence ID" value="ABM76476.1"/>
    <property type="molecule type" value="Genomic_DNA"/>
</dbReference>
<dbReference type="RefSeq" id="WP_011824452.1">
    <property type="nucleotide sequence ID" value="NC_008819.1"/>
</dbReference>
<dbReference type="SMR" id="A2C4R6"/>
<dbReference type="KEGG" id="pme:NATL1_19201"/>
<dbReference type="eggNOG" id="COG0378">
    <property type="taxonomic scope" value="Bacteria"/>
</dbReference>
<dbReference type="HOGENOM" id="CLU_072144_1_0_3"/>
<dbReference type="Proteomes" id="UP000002592">
    <property type="component" value="Chromosome"/>
</dbReference>
<dbReference type="GO" id="GO:0005737">
    <property type="term" value="C:cytoplasm"/>
    <property type="evidence" value="ECO:0007669"/>
    <property type="project" value="UniProtKB-SubCell"/>
</dbReference>
<dbReference type="GO" id="GO:0005525">
    <property type="term" value="F:GTP binding"/>
    <property type="evidence" value="ECO:0007669"/>
    <property type="project" value="UniProtKB-KW"/>
</dbReference>
<dbReference type="GO" id="GO:0003924">
    <property type="term" value="F:GTPase activity"/>
    <property type="evidence" value="ECO:0007669"/>
    <property type="project" value="InterPro"/>
</dbReference>
<dbReference type="GO" id="GO:0016151">
    <property type="term" value="F:nickel cation binding"/>
    <property type="evidence" value="ECO:0007669"/>
    <property type="project" value="UniProtKB-UniRule"/>
</dbReference>
<dbReference type="GO" id="GO:0043419">
    <property type="term" value="P:urea catabolic process"/>
    <property type="evidence" value="ECO:0007669"/>
    <property type="project" value="InterPro"/>
</dbReference>
<dbReference type="CDD" id="cd05540">
    <property type="entry name" value="UreG"/>
    <property type="match status" value="1"/>
</dbReference>
<dbReference type="FunFam" id="3.40.50.300:FF:000208">
    <property type="entry name" value="Urease accessory protein UreG"/>
    <property type="match status" value="1"/>
</dbReference>
<dbReference type="Gene3D" id="3.40.50.300">
    <property type="entry name" value="P-loop containing nucleotide triphosphate hydrolases"/>
    <property type="match status" value="1"/>
</dbReference>
<dbReference type="HAMAP" id="MF_01389">
    <property type="entry name" value="UreG"/>
    <property type="match status" value="1"/>
</dbReference>
<dbReference type="InterPro" id="IPR003495">
    <property type="entry name" value="CobW/HypB/UreG_nucleotide-bd"/>
</dbReference>
<dbReference type="InterPro" id="IPR027417">
    <property type="entry name" value="P-loop_NTPase"/>
</dbReference>
<dbReference type="InterPro" id="IPR004400">
    <property type="entry name" value="UreG"/>
</dbReference>
<dbReference type="NCBIfam" id="TIGR00101">
    <property type="entry name" value="ureG"/>
    <property type="match status" value="1"/>
</dbReference>
<dbReference type="PANTHER" id="PTHR31715">
    <property type="entry name" value="UREASE ACCESSORY PROTEIN G"/>
    <property type="match status" value="1"/>
</dbReference>
<dbReference type="PANTHER" id="PTHR31715:SF0">
    <property type="entry name" value="UREASE ACCESSORY PROTEIN G"/>
    <property type="match status" value="1"/>
</dbReference>
<dbReference type="Pfam" id="PF02492">
    <property type="entry name" value="cobW"/>
    <property type="match status" value="1"/>
</dbReference>
<dbReference type="PIRSF" id="PIRSF005624">
    <property type="entry name" value="Ni-bind_GTPase"/>
    <property type="match status" value="1"/>
</dbReference>
<dbReference type="SUPFAM" id="SSF52540">
    <property type="entry name" value="P-loop containing nucleoside triphosphate hydrolases"/>
    <property type="match status" value="1"/>
</dbReference>
<accession>A2C4R6</accession>
<comment type="function">
    <text evidence="1">Facilitates the functional incorporation of the urease nickel metallocenter. This process requires GTP hydrolysis, probably effectuated by UreG.</text>
</comment>
<comment type="subunit">
    <text evidence="1">Homodimer. UreD, UreF and UreG form a complex that acts as a GTP-hydrolysis-dependent molecular chaperone, activating the urease apoprotein by helping to assemble the nickel containing metallocenter of UreC. The UreE protein probably delivers the nickel.</text>
</comment>
<comment type="subcellular location">
    <subcellularLocation>
        <location evidence="1">Cytoplasm</location>
    </subcellularLocation>
</comment>
<comment type="similarity">
    <text evidence="1">Belongs to the SIMIBI class G3E GTPase family. UreG subfamily.</text>
</comment>
<reference key="1">
    <citation type="journal article" date="2007" name="PLoS Genet.">
        <title>Patterns and implications of gene gain and loss in the evolution of Prochlorococcus.</title>
        <authorList>
            <person name="Kettler G.C."/>
            <person name="Martiny A.C."/>
            <person name="Huang K."/>
            <person name="Zucker J."/>
            <person name="Coleman M.L."/>
            <person name="Rodrigue S."/>
            <person name="Chen F."/>
            <person name="Lapidus A."/>
            <person name="Ferriera S."/>
            <person name="Johnson J."/>
            <person name="Steglich C."/>
            <person name="Church G.M."/>
            <person name="Richardson P."/>
            <person name="Chisholm S.W."/>
        </authorList>
    </citation>
    <scope>NUCLEOTIDE SEQUENCE [LARGE SCALE GENOMIC DNA]</scope>
    <source>
        <strain>NATL1A</strain>
    </source>
</reference>
<protein>
    <recommendedName>
        <fullName evidence="1">Urease accessory protein UreG</fullName>
    </recommendedName>
</protein>
<name>UREG_PROM1</name>
<evidence type="ECO:0000255" key="1">
    <source>
        <dbReference type="HAMAP-Rule" id="MF_01389"/>
    </source>
</evidence>
<keyword id="KW-0143">Chaperone</keyword>
<keyword id="KW-0963">Cytoplasm</keyword>
<keyword id="KW-0342">GTP-binding</keyword>
<keyword id="KW-0996">Nickel insertion</keyword>
<keyword id="KW-0547">Nucleotide-binding</keyword>
<feature type="chain" id="PRO_0000347419" description="Urease accessory protein UreG">
    <location>
        <begin position="1"/>
        <end position="205"/>
    </location>
</feature>
<feature type="binding site" evidence="1">
    <location>
        <begin position="11"/>
        <end position="18"/>
    </location>
    <ligand>
        <name>GTP</name>
        <dbReference type="ChEBI" id="CHEBI:37565"/>
    </ligand>
</feature>
<gene>
    <name evidence="1" type="primary">ureG</name>
    <name type="ordered locus">NATL1_19201</name>
</gene>
<sequence length="205" mass="22449">MESKLRVGIAGPVGSGKTAIIQRLCENLKDRLEIAVVTNDIYTQEDAKFLTNSKALAPERIKGVETGGCPHTAIREDCSINRIAVEELEHEFTTLDLVFVESGGDNLAASFSPELVDVCIYIIDVAAGDKIPRKGGPGITRSDLLVINKIDLAEMVGASLKIMERDTLLMRKNLPWCFTNTKTGEGIKIIAEFLCNQIPFARKMV</sequence>
<proteinExistence type="inferred from homology"/>
<organism>
    <name type="scientific">Prochlorococcus marinus (strain NATL1A)</name>
    <dbReference type="NCBI Taxonomy" id="167555"/>
    <lineage>
        <taxon>Bacteria</taxon>
        <taxon>Bacillati</taxon>
        <taxon>Cyanobacteriota</taxon>
        <taxon>Cyanophyceae</taxon>
        <taxon>Synechococcales</taxon>
        <taxon>Prochlorococcaceae</taxon>
        <taxon>Prochlorococcus</taxon>
    </lineage>
</organism>